<accession>A1RFP5</accession>
<sequence>MPFALGQRWISDTESELGLGTVVQVEGRMVTVLFPATGENRMFSRAEAPLTRVTYNPGDTVESHEGWSLTIEDLTEKDGLVIYHGIHSETGEQVTLRETLLNHNIRFNKPQDRLFAGQIDRLDRFGVRYQCQMLRHKLATSDLLGLQGPRVGLIPHQMWIAHEVGRRYAPRVLLADEVGLGKTIEAGLIIHQQLLTGRAERVLVIVPDTLRHQWLVEMLRRFNLRFSVFDEDRCVEAYADHDNPFYTEQLVICSLELLRKKKRLDQALDADWDLLVVDEAHHLEWTEEAPSRAYQVVEALSEVVPGVLLLTATPDQLGHESHFARLRLLDPDRFYDYDAFLAEENSYKDVAIAAEALAGNAKLPDAAINSLTELLSEKDIAPSIRLIQADGIDSDVQQAARSELLQELLDRHGTGRVLYRNSRASVKGFPKRFFNPHPQTMPEQYLTAARVSSMMGGHKTLEAKAAQALSPEKLYQEFEDNSASWWKFDPRVDWLIAFLKSHRSKKVLIIASQAETALSLEEALRTREGIQATVFHEGMSIIERDKAGAYFAQEEGGAQALICSEIGSEGRNFQFASHLVLFDLPLNPDLLEQRIGRLDRIGQKNDIQIHLPYLEDTAQERLMQWYHQGLNAFELTCPSGHVLYAEFAEDLLNVLVGDDADELTNLLNHTQSRYKELKHAMEQGRDKLLEINSHGGDRAKAIVERLAQNDENTQLIGSVIRLWDIIGVDQEDKGENSIILRPSEHMMFPTYPGLPEDGVTVTFDRDTALSRDDIALITQEHPLVQTGLDLITGSETGTTSVAVLKNKALPAGTLFLELIYMADASAPKSSQLYRYLPPTPIRILLDKNGNDLSAKVDYASFDKQLSAVNRHIGGKLVTASQPILHPLFAKGEEYAQAAVDELVIQAREKMTTQLTGELDRLESLKAVNPNIREEELEYLRNQMQELNTYLDASQLQLDAIRMVLVSHV</sequence>
<name>RAPA_SHESW</name>
<keyword id="KW-0010">Activator</keyword>
<keyword id="KW-0067">ATP-binding</keyword>
<keyword id="KW-0238">DNA-binding</keyword>
<keyword id="KW-0347">Helicase</keyword>
<keyword id="KW-0378">Hydrolase</keyword>
<keyword id="KW-0547">Nucleotide-binding</keyword>
<keyword id="KW-0804">Transcription</keyword>
<keyword id="KW-0805">Transcription regulation</keyword>
<gene>
    <name evidence="1" type="primary">rapA</name>
    <name type="ordered locus">Sputw3181_0639</name>
</gene>
<organism>
    <name type="scientific">Shewanella sp. (strain W3-18-1)</name>
    <dbReference type="NCBI Taxonomy" id="351745"/>
    <lineage>
        <taxon>Bacteria</taxon>
        <taxon>Pseudomonadati</taxon>
        <taxon>Pseudomonadota</taxon>
        <taxon>Gammaproteobacteria</taxon>
        <taxon>Alteromonadales</taxon>
        <taxon>Shewanellaceae</taxon>
        <taxon>Shewanella</taxon>
    </lineage>
</organism>
<comment type="function">
    <text evidence="1">Transcription regulator that activates transcription by stimulating RNA polymerase (RNAP) recycling in case of stress conditions such as supercoiled DNA or high salt concentrations. Probably acts by releasing the RNAP, when it is trapped or immobilized on tightly supercoiled DNA. Does not activate transcription on linear DNA. Probably not involved in DNA repair.</text>
</comment>
<comment type="subunit">
    <text evidence="1">Interacts with the RNAP. Has a higher affinity for the core RNAP than for the holoenzyme. Its ATPase activity is stimulated by binding to RNAP.</text>
</comment>
<comment type="similarity">
    <text evidence="1">Belongs to the SNF2/RAD54 helicase family. RapA subfamily.</text>
</comment>
<reference key="1">
    <citation type="submission" date="2006-12" db="EMBL/GenBank/DDBJ databases">
        <title>Complete sequence of Shewanella sp. W3-18-1.</title>
        <authorList>
            <consortium name="US DOE Joint Genome Institute"/>
            <person name="Copeland A."/>
            <person name="Lucas S."/>
            <person name="Lapidus A."/>
            <person name="Barry K."/>
            <person name="Detter J.C."/>
            <person name="Glavina del Rio T."/>
            <person name="Hammon N."/>
            <person name="Israni S."/>
            <person name="Dalin E."/>
            <person name="Tice H."/>
            <person name="Pitluck S."/>
            <person name="Chain P."/>
            <person name="Malfatti S."/>
            <person name="Shin M."/>
            <person name="Vergez L."/>
            <person name="Schmutz J."/>
            <person name="Larimer F."/>
            <person name="Land M."/>
            <person name="Hauser L."/>
            <person name="Kyrpides N."/>
            <person name="Lykidis A."/>
            <person name="Tiedje J."/>
            <person name="Richardson P."/>
        </authorList>
    </citation>
    <scope>NUCLEOTIDE SEQUENCE [LARGE SCALE GENOMIC DNA]</scope>
    <source>
        <strain>W3-18-1</strain>
    </source>
</reference>
<evidence type="ECO:0000255" key="1">
    <source>
        <dbReference type="HAMAP-Rule" id="MF_01821"/>
    </source>
</evidence>
<proteinExistence type="inferred from homology"/>
<dbReference type="EC" id="3.6.4.-" evidence="1"/>
<dbReference type="EMBL" id="CP000503">
    <property type="protein sequence ID" value="ABM23490.1"/>
    <property type="molecule type" value="Genomic_DNA"/>
</dbReference>
<dbReference type="RefSeq" id="WP_011788020.1">
    <property type="nucleotide sequence ID" value="NC_008750.1"/>
</dbReference>
<dbReference type="SMR" id="A1RFP5"/>
<dbReference type="KEGG" id="shw:Sputw3181_0639"/>
<dbReference type="HOGENOM" id="CLU_011520_0_0_6"/>
<dbReference type="Proteomes" id="UP000002597">
    <property type="component" value="Chromosome"/>
</dbReference>
<dbReference type="GO" id="GO:0005524">
    <property type="term" value="F:ATP binding"/>
    <property type="evidence" value="ECO:0007669"/>
    <property type="project" value="UniProtKB-UniRule"/>
</dbReference>
<dbReference type="GO" id="GO:0003677">
    <property type="term" value="F:DNA binding"/>
    <property type="evidence" value="ECO:0007669"/>
    <property type="project" value="UniProtKB-KW"/>
</dbReference>
<dbReference type="GO" id="GO:0004386">
    <property type="term" value="F:helicase activity"/>
    <property type="evidence" value="ECO:0007669"/>
    <property type="project" value="UniProtKB-UniRule"/>
</dbReference>
<dbReference type="GO" id="GO:0016817">
    <property type="term" value="F:hydrolase activity, acting on acid anhydrides"/>
    <property type="evidence" value="ECO:0007669"/>
    <property type="project" value="InterPro"/>
</dbReference>
<dbReference type="GO" id="GO:0006355">
    <property type="term" value="P:regulation of DNA-templated transcription"/>
    <property type="evidence" value="ECO:0007669"/>
    <property type="project" value="UniProtKB-UniRule"/>
</dbReference>
<dbReference type="CDD" id="cd18011">
    <property type="entry name" value="DEXDc_RapA"/>
    <property type="match status" value="1"/>
</dbReference>
<dbReference type="CDD" id="cd18793">
    <property type="entry name" value="SF2_C_SNF"/>
    <property type="match status" value="1"/>
</dbReference>
<dbReference type="Gene3D" id="2.30.30.140">
    <property type="match status" value="1"/>
</dbReference>
<dbReference type="Gene3D" id="2.30.30.930">
    <property type="match status" value="1"/>
</dbReference>
<dbReference type="Gene3D" id="3.30.360.80">
    <property type="match status" value="1"/>
</dbReference>
<dbReference type="Gene3D" id="6.10.140.1500">
    <property type="match status" value="1"/>
</dbReference>
<dbReference type="Gene3D" id="6.10.140.2230">
    <property type="match status" value="1"/>
</dbReference>
<dbReference type="Gene3D" id="3.40.50.300">
    <property type="entry name" value="P-loop containing nucleotide triphosphate hydrolases"/>
    <property type="match status" value="1"/>
</dbReference>
<dbReference type="Gene3D" id="3.40.50.10810">
    <property type="entry name" value="Tandem AAA-ATPase domain"/>
    <property type="match status" value="1"/>
</dbReference>
<dbReference type="HAMAP" id="MF_01821">
    <property type="entry name" value="Helicase_RapA"/>
    <property type="match status" value="1"/>
</dbReference>
<dbReference type="InterPro" id="IPR014001">
    <property type="entry name" value="Helicase_ATP-bd"/>
</dbReference>
<dbReference type="InterPro" id="IPR001650">
    <property type="entry name" value="Helicase_C-like"/>
</dbReference>
<dbReference type="InterPro" id="IPR023949">
    <property type="entry name" value="Helicase_RapA"/>
</dbReference>
<dbReference type="InterPro" id="IPR027417">
    <property type="entry name" value="P-loop_NTPase"/>
</dbReference>
<dbReference type="InterPro" id="IPR022737">
    <property type="entry name" value="RapA_C"/>
</dbReference>
<dbReference type="InterPro" id="IPR038718">
    <property type="entry name" value="SNF2-like_sf"/>
</dbReference>
<dbReference type="InterPro" id="IPR049730">
    <property type="entry name" value="SNF2/RAD54-like_C"/>
</dbReference>
<dbReference type="InterPro" id="IPR000330">
    <property type="entry name" value="SNF2_N"/>
</dbReference>
<dbReference type="InterPro" id="IPR040765">
    <property type="entry name" value="Tudor_1_RapA"/>
</dbReference>
<dbReference type="InterPro" id="IPR040766">
    <property type="entry name" value="Tudor_2_RapA"/>
</dbReference>
<dbReference type="NCBIfam" id="NF003426">
    <property type="entry name" value="PRK04914.1"/>
    <property type="match status" value="1"/>
</dbReference>
<dbReference type="PANTHER" id="PTHR45766">
    <property type="entry name" value="DNA ANNEALING HELICASE AND ENDONUCLEASE ZRANB3 FAMILY MEMBER"/>
    <property type="match status" value="1"/>
</dbReference>
<dbReference type="PANTHER" id="PTHR45766:SF6">
    <property type="entry name" value="SWI_SNF-RELATED MATRIX-ASSOCIATED ACTIN-DEPENDENT REGULATOR OF CHROMATIN SUBFAMILY A-LIKE PROTEIN 1"/>
    <property type="match status" value="1"/>
</dbReference>
<dbReference type="Pfam" id="PF00271">
    <property type="entry name" value="Helicase_C"/>
    <property type="match status" value="1"/>
</dbReference>
<dbReference type="Pfam" id="PF12137">
    <property type="entry name" value="RapA_C"/>
    <property type="match status" value="1"/>
</dbReference>
<dbReference type="Pfam" id="PF00176">
    <property type="entry name" value="SNF2-rel_dom"/>
    <property type="match status" value="1"/>
</dbReference>
<dbReference type="Pfam" id="PF18339">
    <property type="entry name" value="Tudor_1_RapA"/>
    <property type="match status" value="1"/>
</dbReference>
<dbReference type="Pfam" id="PF18337">
    <property type="entry name" value="Tudor_RapA"/>
    <property type="match status" value="1"/>
</dbReference>
<dbReference type="SMART" id="SM00487">
    <property type="entry name" value="DEXDc"/>
    <property type="match status" value="1"/>
</dbReference>
<dbReference type="SMART" id="SM00490">
    <property type="entry name" value="HELICc"/>
    <property type="match status" value="1"/>
</dbReference>
<dbReference type="SUPFAM" id="SSF52540">
    <property type="entry name" value="P-loop containing nucleoside triphosphate hydrolases"/>
    <property type="match status" value="2"/>
</dbReference>
<dbReference type="PROSITE" id="PS51192">
    <property type="entry name" value="HELICASE_ATP_BIND_1"/>
    <property type="match status" value="1"/>
</dbReference>
<dbReference type="PROSITE" id="PS51194">
    <property type="entry name" value="HELICASE_CTER"/>
    <property type="match status" value="1"/>
</dbReference>
<feature type="chain" id="PRO_1000088391" description="RNA polymerase-associated protein RapA">
    <location>
        <begin position="1"/>
        <end position="968"/>
    </location>
</feature>
<feature type="domain" description="Helicase ATP-binding" evidence="1">
    <location>
        <begin position="163"/>
        <end position="332"/>
    </location>
</feature>
<feature type="domain" description="Helicase C-terminal" evidence="1">
    <location>
        <begin position="491"/>
        <end position="643"/>
    </location>
</feature>
<feature type="short sequence motif" description="DEAH box">
    <location>
        <begin position="278"/>
        <end position="281"/>
    </location>
</feature>
<feature type="binding site" evidence="1">
    <location>
        <begin position="176"/>
        <end position="183"/>
    </location>
    <ligand>
        <name>ATP</name>
        <dbReference type="ChEBI" id="CHEBI:30616"/>
    </ligand>
</feature>
<protein>
    <recommendedName>
        <fullName evidence="1">RNA polymerase-associated protein RapA</fullName>
        <ecNumber evidence="1">3.6.4.-</ecNumber>
    </recommendedName>
    <alternativeName>
        <fullName evidence="1">ATP-dependent helicase HepA</fullName>
    </alternativeName>
</protein>